<feature type="chain" id="PRO_0000229307" description="ATP phosphoribosyltransferase">
    <location>
        <begin position="1"/>
        <end position="231"/>
    </location>
</feature>
<protein>
    <recommendedName>
        <fullName evidence="1">ATP phosphoribosyltransferase</fullName>
        <shortName evidence="1">ATP-PRT</shortName>
        <shortName evidence="1">ATP-PRTase</shortName>
        <ecNumber evidence="1">2.4.2.17</ecNumber>
    </recommendedName>
</protein>
<organism>
    <name type="scientific">Brucella abortus biovar 1 (strain 9-941)</name>
    <dbReference type="NCBI Taxonomy" id="262698"/>
    <lineage>
        <taxon>Bacteria</taxon>
        <taxon>Pseudomonadati</taxon>
        <taxon>Pseudomonadota</taxon>
        <taxon>Alphaproteobacteria</taxon>
        <taxon>Hyphomicrobiales</taxon>
        <taxon>Brucellaceae</taxon>
        <taxon>Brucella/Ochrobactrum group</taxon>
        <taxon>Brucella</taxon>
    </lineage>
</organism>
<name>HIS1_BRUAB</name>
<accession>Q579Q6</accession>
<dbReference type="EC" id="2.4.2.17" evidence="1"/>
<dbReference type="EMBL" id="AE017224">
    <property type="protein sequence ID" value="AAX75628.1"/>
    <property type="molecule type" value="Genomic_DNA"/>
</dbReference>
<dbReference type="RefSeq" id="WP_002966393.1">
    <property type="nucleotide sequence ID" value="NC_006933.1"/>
</dbReference>
<dbReference type="SMR" id="Q579Q6"/>
<dbReference type="EnsemblBacteria" id="AAX75628">
    <property type="protein sequence ID" value="AAX75628"/>
    <property type="gene ID" value="BruAb2_0184"/>
</dbReference>
<dbReference type="GeneID" id="93015854"/>
<dbReference type="KEGG" id="bmb:BruAb2_0184"/>
<dbReference type="HOGENOM" id="CLU_038115_0_1_5"/>
<dbReference type="UniPathway" id="UPA00031">
    <property type="reaction ID" value="UER00006"/>
</dbReference>
<dbReference type="Proteomes" id="UP000000540">
    <property type="component" value="Chromosome II"/>
</dbReference>
<dbReference type="GO" id="GO:0005737">
    <property type="term" value="C:cytoplasm"/>
    <property type="evidence" value="ECO:0007669"/>
    <property type="project" value="UniProtKB-SubCell"/>
</dbReference>
<dbReference type="GO" id="GO:0005524">
    <property type="term" value="F:ATP binding"/>
    <property type="evidence" value="ECO:0007669"/>
    <property type="project" value="UniProtKB-KW"/>
</dbReference>
<dbReference type="GO" id="GO:0003879">
    <property type="term" value="F:ATP phosphoribosyltransferase activity"/>
    <property type="evidence" value="ECO:0007669"/>
    <property type="project" value="UniProtKB-UniRule"/>
</dbReference>
<dbReference type="GO" id="GO:0000105">
    <property type="term" value="P:L-histidine biosynthetic process"/>
    <property type="evidence" value="ECO:0007669"/>
    <property type="project" value="UniProtKB-UniRule"/>
</dbReference>
<dbReference type="CDD" id="cd13593">
    <property type="entry name" value="PBP2_HisGL3"/>
    <property type="match status" value="1"/>
</dbReference>
<dbReference type="Gene3D" id="3.40.190.10">
    <property type="entry name" value="Periplasmic binding protein-like II"/>
    <property type="match status" value="2"/>
</dbReference>
<dbReference type="HAMAP" id="MF_01018">
    <property type="entry name" value="HisG_Short"/>
    <property type="match status" value="1"/>
</dbReference>
<dbReference type="InterPro" id="IPR013820">
    <property type="entry name" value="ATP_PRibTrfase_cat"/>
</dbReference>
<dbReference type="InterPro" id="IPR018198">
    <property type="entry name" value="ATP_PRibTrfase_CS"/>
</dbReference>
<dbReference type="InterPro" id="IPR001348">
    <property type="entry name" value="ATP_PRibTrfase_HisG"/>
</dbReference>
<dbReference type="InterPro" id="IPR024893">
    <property type="entry name" value="ATP_PRibTrfase_HisG_short"/>
</dbReference>
<dbReference type="NCBIfam" id="TIGR00070">
    <property type="entry name" value="hisG"/>
    <property type="match status" value="1"/>
</dbReference>
<dbReference type="PANTHER" id="PTHR21403:SF8">
    <property type="entry name" value="ATP PHOSPHORIBOSYLTRANSFERASE"/>
    <property type="match status" value="1"/>
</dbReference>
<dbReference type="PANTHER" id="PTHR21403">
    <property type="entry name" value="ATP PHOSPHORIBOSYLTRANSFERASE ATP-PRTASE"/>
    <property type="match status" value="1"/>
</dbReference>
<dbReference type="Pfam" id="PF01634">
    <property type="entry name" value="HisG"/>
    <property type="match status" value="1"/>
</dbReference>
<dbReference type="SUPFAM" id="SSF53850">
    <property type="entry name" value="Periplasmic binding protein-like II"/>
    <property type="match status" value="1"/>
</dbReference>
<dbReference type="PROSITE" id="PS01316">
    <property type="entry name" value="ATP_P_PHORIBOSYLTR"/>
    <property type="match status" value="1"/>
</dbReference>
<keyword id="KW-0028">Amino-acid biosynthesis</keyword>
<keyword id="KW-0067">ATP-binding</keyword>
<keyword id="KW-0963">Cytoplasm</keyword>
<keyword id="KW-0328">Glycosyltransferase</keyword>
<keyword id="KW-0368">Histidine biosynthesis</keyword>
<keyword id="KW-0547">Nucleotide-binding</keyword>
<keyword id="KW-0808">Transferase</keyword>
<sequence length="231" mass="25469">MSVTLALPSKGRLKEKTLAVLEKAGYKVVLPDDDRNYRARVEGEDDLDILFLSASEIARELGYGSVDLGVTGEDLVRETLAHADERVAIEAQLGFGHADVVVAVPEVWRDVTTMADLDDVAADFRQRHGRRLRIATKYWRLTQQFFSQKHGIQVYRIVESLGATEGAPAAGSADMIVDITSTGSTLRANRLKVLEDGIILRSQACLVSARRSHTSRRVEEIAARIRAGLEI</sequence>
<gene>
    <name evidence="1" type="primary">hisG</name>
    <name type="ordered locus">BruAb2_0184</name>
</gene>
<proteinExistence type="inferred from homology"/>
<evidence type="ECO:0000255" key="1">
    <source>
        <dbReference type="HAMAP-Rule" id="MF_01018"/>
    </source>
</evidence>
<comment type="function">
    <text evidence="1">Catalyzes the condensation of ATP and 5-phosphoribose 1-diphosphate to form N'-(5'-phosphoribosyl)-ATP (PR-ATP). Has a crucial role in the pathway because the rate of histidine biosynthesis seems to be controlled primarily by regulation of HisG enzymatic activity.</text>
</comment>
<comment type="catalytic activity">
    <reaction evidence="1">
        <text>1-(5-phospho-beta-D-ribosyl)-ATP + diphosphate = 5-phospho-alpha-D-ribose 1-diphosphate + ATP</text>
        <dbReference type="Rhea" id="RHEA:18473"/>
        <dbReference type="ChEBI" id="CHEBI:30616"/>
        <dbReference type="ChEBI" id="CHEBI:33019"/>
        <dbReference type="ChEBI" id="CHEBI:58017"/>
        <dbReference type="ChEBI" id="CHEBI:73183"/>
        <dbReference type="EC" id="2.4.2.17"/>
    </reaction>
</comment>
<comment type="pathway">
    <text evidence="1">Amino-acid biosynthesis; L-histidine biosynthesis; L-histidine from 5-phospho-alpha-D-ribose 1-diphosphate: step 1/9.</text>
</comment>
<comment type="subunit">
    <text evidence="1">Heteromultimer composed of HisG and HisZ subunits.</text>
</comment>
<comment type="subcellular location">
    <subcellularLocation>
        <location evidence="1">Cytoplasm</location>
    </subcellularLocation>
</comment>
<comment type="domain">
    <text>Lacks the C-terminal regulatory region which is replaced by HisZ.</text>
</comment>
<comment type="similarity">
    <text evidence="1">Belongs to the ATP phosphoribosyltransferase family. Short subfamily.</text>
</comment>
<reference key="1">
    <citation type="journal article" date="2005" name="J. Bacteriol.">
        <title>Completion of the genome sequence of Brucella abortus and comparison to the highly similar genomes of Brucella melitensis and Brucella suis.</title>
        <authorList>
            <person name="Halling S.M."/>
            <person name="Peterson-Burch B.D."/>
            <person name="Bricker B.J."/>
            <person name="Zuerner R.L."/>
            <person name="Qing Z."/>
            <person name="Li L.-L."/>
            <person name="Kapur V."/>
            <person name="Alt D.P."/>
            <person name="Olsen S.C."/>
        </authorList>
    </citation>
    <scope>NUCLEOTIDE SEQUENCE [LARGE SCALE GENOMIC DNA]</scope>
    <source>
        <strain>9-941</strain>
    </source>
</reference>